<keyword id="KW-0418">Kinase</keyword>
<keyword id="KW-0547">Nucleotide-binding</keyword>
<keyword id="KW-1185">Reference proteome</keyword>
<keyword id="KW-0723">Serine/threonine-protein kinase</keyword>
<keyword id="KW-0808">Transferase</keyword>
<reference key="1">
    <citation type="journal article" date="2006" name="Proc. Natl. Acad. Sci. U.S.A.">
        <title>Burkholderia xenovorans LB400 harbors a multi-replicon, 9.73-Mbp genome shaped for versatility.</title>
        <authorList>
            <person name="Chain P.S.G."/>
            <person name="Denef V.J."/>
            <person name="Konstantinidis K.T."/>
            <person name="Vergez L.M."/>
            <person name="Agullo L."/>
            <person name="Reyes V.L."/>
            <person name="Hauser L."/>
            <person name="Cordova M."/>
            <person name="Gomez L."/>
            <person name="Gonzalez M."/>
            <person name="Land M."/>
            <person name="Lao V."/>
            <person name="Larimer F."/>
            <person name="LiPuma J.J."/>
            <person name="Mahenthiralingam E."/>
            <person name="Malfatti S.A."/>
            <person name="Marx C.J."/>
            <person name="Parnell J.J."/>
            <person name="Ramette A."/>
            <person name="Richardson P."/>
            <person name="Seeger M."/>
            <person name="Smith D."/>
            <person name="Spilker T."/>
            <person name="Sul W.J."/>
            <person name="Tsoi T.V."/>
            <person name="Ulrich L.E."/>
            <person name="Zhulin I.B."/>
            <person name="Tiedje J.M."/>
        </authorList>
    </citation>
    <scope>NUCLEOTIDE SEQUENCE [LARGE SCALE GENOMIC DNA]</scope>
    <source>
        <strain>LB400</strain>
    </source>
</reference>
<feature type="chain" id="PRO_0000316656" description="Putative phosphoenolpyruvate synthase regulatory protein">
    <location>
        <begin position="1"/>
        <end position="271"/>
    </location>
</feature>
<feature type="binding site" evidence="1">
    <location>
        <begin position="151"/>
        <end position="158"/>
    </location>
    <ligand>
        <name>ADP</name>
        <dbReference type="ChEBI" id="CHEBI:456216"/>
    </ligand>
</feature>
<accession>Q13XD2</accession>
<sequence length="271" mass="30461">MPPTVFIVSDGTGITAETFAHSILSQFDQKFRLVRVPFVDSTEKAYATLEKINEAILQDGRRPIVFTTLVDSASNQIVKGSNALVLDMFQTFVEPLEQELELKSSHAMGRGHQNADTEEYKNRIEAINFSLAHDDGQSNRNLADADVILVGVSRSGKTPTSLYLAMQYGVKAANYPLIPEDFERGKLPTPLLAHRQKMFGLSIDPQRLSEIRNERRPGSKYAAPENCRYEINEAEAMMRREGIKWLSSTHKSIEEIATTILQEIKLERAAY</sequence>
<gene>
    <name type="ordered locus">Bxeno_A2719</name>
    <name type="ORF">Bxe_A1698</name>
</gene>
<dbReference type="EC" id="2.7.11.33" evidence="1"/>
<dbReference type="EC" id="2.7.4.28" evidence="1"/>
<dbReference type="EMBL" id="CP000270">
    <property type="protein sequence ID" value="ABE31257.1"/>
    <property type="status" value="ALT_INIT"/>
    <property type="molecule type" value="Genomic_DNA"/>
</dbReference>
<dbReference type="RefSeq" id="WP_038457743.1">
    <property type="nucleotide sequence ID" value="NC_007951.1"/>
</dbReference>
<dbReference type="SMR" id="Q13XD2"/>
<dbReference type="STRING" id="266265.Bxe_A1698"/>
<dbReference type="KEGG" id="bxb:DR64_3863"/>
<dbReference type="KEGG" id="bxe:Bxe_A1698"/>
<dbReference type="PATRIC" id="fig|266265.5.peg.2849"/>
<dbReference type="eggNOG" id="COG1806">
    <property type="taxonomic scope" value="Bacteria"/>
</dbReference>
<dbReference type="OrthoDB" id="9782201at2"/>
<dbReference type="Proteomes" id="UP000001817">
    <property type="component" value="Chromosome 1"/>
</dbReference>
<dbReference type="GO" id="GO:0043531">
    <property type="term" value="F:ADP binding"/>
    <property type="evidence" value="ECO:0007669"/>
    <property type="project" value="UniProtKB-UniRule"/>
</dbReference>
<dbReference type="GO" id="GO:0005524">
    <property type="term" value="F:ATP binding"/>
    <property type="evidence" value="ECO:0007669"/>
    <property type="project" value="InterPro"/>
</dbReference>
<dbReference type="GO" id="GO:0016776">
    <property type="term" value="F:phosphotransferase activity, phosphate group as acceptor"/>
    <property type="evidence" value="ECO:0007669"/>
    <property type="project" value="UniProtKB-UniRule"/>
</dbReference>
<dbReference type="GO" id="GO:0004674">
    <property type="term" value="F:protein serine/threonine kinase activity"/>
    <property type="evidence" value="ECO:0007669"/>
    <property type="project" value="UniProtKB-UniRule"/>
</dbReference>
<dbReference type="HAMAP" id="MF_01062">
    <property type="entry name" value="PSRP"/>
    <property type="match status" value="1"/>
</dbReference>
<dbReference type="InterPro" id="IPR005177">
    <property type="entry name" value="Kinase-pyrophosphorylase"/>
</dbReference>
<dbReference type="InterPro" id="IPR026530">
    <property type="entry name" value="PSRP"/>
</dbReference>
<dbReference type="NCBIfam" id="NF003742">
    <property type="entry name" value="PRK05339.1"/>
    <property type="match status" value="1"/>
</dbReference>
<dbReference type="PANTHER" id="PTHR31756">
    <property type="entry name" value="PYRUVATE, PHOSPHATE DIKINASE REGULATORY PROTEIN 1, CHLOROPLASTIC"/>
    <property type="match status" value="1"/>
</dbReference>
<dbReference type="PANTHER" id="PTHR31756:SF3">
    <property type="entry name" value="PYRUVATE, PHOSPHATE DIKINASE REGULATORY PROTEIN 1, CHLOROPLASTIC"/>
    <property type="match status" value="1"/>
</dbReference>
<dbReference type="Pfam" id="PF03618">
    <property type="entry name" value="Kinase-PPPase"/>
    <property type="match status" value="1"/>
</dbReference>
<protein>
    <recommendedName>
        <fullName evidence="1">Putative phosphoenolpyruvate synthase regulatory protein</fullName>
        <shortName evidence="1">PEP synthase regulatory protein</shortName>
        <shortName evidence="1">PSRP</shortName>
        <ecNumber evidence="1">2.7.11.33</ecNumber>
        <ecNumber evidence="1">2.7.4.28</ecNumber>
    </recommendedName>
    <alternativeName>
        <fullName evidence="1">Pyruvate, water dikinase regulatory protein</fullName>
    </alternativeName>
</protein>
<organism>
    <name type="scientific">Paraburkholderia xenovorans (strain LB400)</name>
    <dbReference type="NCBI Taxonomy" id="266265"/>
    <lineage>
        <taxon>Bacteria</taxon>
        <taxon>Pseudomonadati</taxon>
        <taxon>Pseudomonadota</taxon>
        <taxon>Betaproteobacteria</taxon>
        <taxon>Burkholderiales</taxon>
        <taxon>Burkholderiaceae</taxon>
        <taxon>Paraburkholderia</taxon>
    </lineage>
</organism>
<proteinExistence type="inferred from homology"/>
<name>PSRP_PARXL</name>
<evidence type="ECO:0000255" key="1">
    <source>
        <dbReference type="HAMAP-Rule" id="MF_01062"/>
    </source>
</evidence>
<evidence type="ECO:0000305" key="2"/>
<comment type="function">
    <text evidence="1">Bifunctional serine/threonine kinase and phosphorylase involved in the regulation of the phosphoenolpyruvate synthase (PEPS) by catalyzing its phosphorylation/dephosphorylation.</text>
</comment>
<comment type="catalytic activity">
    <reaction evidence="1">
        <text>[pyruvate, water dikinase] + ADP = [pyruvate, water dikinase]-phosphate + AMP + H(+)</text>
        <dbReference type="Rhea" id="RHEA:46020"/>
        <dbReference type="Rhea" id="RHEA-COMP:11425"/>
        <dbReference type="Rhea" id="RHEA-COMP:11426"/>
        <dbReference type="ChEBI" id="CHEBI:15378"/>
        <dbReference type="ChEBI" id="CHEBI:43176"/>
        <dbReference type="ChEBI" id="CHEBI:68546"/>
        <dbReference type="ChEBI" id="CHEBI:456215"/>
        <dbReference type="ChEBI" id="CHEBI:456216"/>
        <dbReference type="EC" id="2.7.11.33"/>
    </reaction>
</comment>
<comment type="catalytic activity">
    <reaction evidence="1">
        <text>[pyruvate, water dikinase]-phosphate + phosphate + H(+) = [pyruvate, water dikinase] + diphosphate</text>
        <dbReference type="Rhea" id="RHEA:48580"/>
        <dbReference type="Rhea" id="RHEA-COMP:11425"/>
        <dbReference type="Rhea" id="RHEA-COMP:11426"/>
        <dbReference type="ChEBI" id="CHEBI:15378"/>
        <dbReference type="ChEBI" id="CHEBI:33019"/>
        <dbReference type="ChEBI" id="CHEBI:43176"/>
        <dbReference type="ChEBI" id="CHEBI:43474"/>
        <dbReference type="ChEBI" id="CHEBI:68546"/>
        <dbReference type="EC" id="2.7.4.28"/>
    </reaction>
</comment>
<comment type="similarity">
    <text evidence="1">Belongs to the pyruvate, phosphate/water dikinase regulatory protein family. PSRP subfamily.</text>
</comment>
<comment type="sequence caution" evidence="2">
    <conflict type="erroneous initiation">
        <sequence resource="EMBL-CDS" id="ABE31257"/>
    </conflict>
</comment>